<evidence type="ECO:0000255" key="1">
    <source>
        <dbReference type="HAMAP-Rule" id="MF_00276"/>
    </source>
</evidence>
<sequence length="197" mass="20044">MLTLVRQSLVVTLLLAALLCGAYPVLVTGAAQALLPGKANGSPVMVDGRVTGSDLIGQHFTGAGYFHGRPSAAGEDGYDASASGGSNLGPTSRTLAEAMQARADALRAENPDWKAPLPPDMVTASASGLDPHVSPQGAAMQVARVAAARGLPIKSVARLVEEHVEGPQLGLFGEPHVNVLRLNLALDALAGGRAEGN</sequence>
<accession>B8DR36</accession>
<gene>
    <name evidence="1" type="primary">kdpC</name>
    <name type="ordered locus">DvMF_2575</name>
</gene>
<keyword id="KW-0067">ATP-binding</keyword>
<keyword id="KW-0997">Cell inner membrane</keyword>
<keyword id="KW-1003">Cell membrane</keyword>
<keyword id="KW-0406">Ion transport</keyword>
<keyword id="KW-0472">Membrane</keyword>
<keyword id="KW-0547">Nucleotide-binding</keyword>
<keyword id="KW-0630">Potassium</keyword>
<keyword id="KW-0633">Potassium transport</keyword>
<keyword id="KW-0812">Transmembrane</keyword>
<keyword id="KW-1133">Transmembrane helix</keyword>
<keyword id="KW-0813">Transport</keyword>
<dbReference type="EMBL" id="CP001197">
    <property type="protein sequence ID" value="ACL09514.1"/>
    <property type="molecule type" value="Genomic_DNA"/>
</dbReference>
<dbReference type="SMR" id="B8DR36"/>
<dbReference type="STRING" id="883.DvMF_2575"/>
<dbReference type="KEGG" id="dvm:DvMF_2575"/>
<dbReference type="eggNOG" id="COG2156">
    <property type="taxonomic scope" value="Bacteria"/>
</dbReference>
<dbReference type="HOGENOM" id="CLU_077094_2_0_7"/>
<dbReference type="OrthoDB" id="9788285at2"/>
<dbReference type="GO" id="GO:0005886">
    <property type="term" value="C:plasma membrane"/>
    <property type="evidence" value="ECO:0007669"/>
    <property type="project" value="UniProtKB-SubCell"/>
</dbReference>
<dbReference type="GO" id="GO:0005524">
    <property type="term" value="F:ATP binding"/>
    <property type="evidence" value="ECO:0007669"/>
    <property type="project" value="UniProtKB-UniRule"/>
</dbReference>
<dbReference type="GO" id="GO:0008556">
    <property type="term" value="F:P-type potassium transmembrane transporter activity"/>
    <property type="evidence" value="ECO:0007669"/>
    <property type="project" value="InterPro"/>
</dbReference>
<dbReference type="HAMAP" id="MF_00276">
    <property type="entry name" value="KdpC"/>
    <property type="match status" value="1"/>
</dbReference>
<dbReference type="InterPro" id="IPR003820">
    <property type="entry name" value="KdpC"/>
</dbReference>
<dbReference type="NCBIfam" id="TIGR00681">
    <property type="entry name" value="kdpC"/>
    <property type="match status" value="1"/>
</dbReference>
<dbReference type="NCBIfam" id="NF001454">
    <property type="entry name" value="PRK00315.1"/>
    <property type="match status" value="1"/>
</dbReference>
<dbReference type="PANTHER" id="PTHR30042">
    <property type="entry name" value="POTASSIUM-TRANSPORTING ATPASE C CHAIN"/>
    <property type="match status" value="1"/>
</dbReference>
<dbReference type="PANTHER" id="PTHR30042:SF2">
    <property type="entry name" value="POTASSIUM-TRANSPORTING ATPASE KDPC SUBUNIT"/>
    <property type="match status" value="1"/>
</dbReference>
<dbReference type="Pfam" id="PF02669">
    <property type="entry name" value="KdpC"/>
    <property type="match status" value="1"/>
</dbReference>
<dbReference type="PIRSF" id="PIRSF001296">
    <property type="entry name" value="K_ATPase_KdpC"/>
    <property type="match status" value="1"/>
</dbReference>
<proteinExistence type="inferred from homology"/>
<reference key="1">
    <citation type="submission" date="2008-10" db="EMBL/GenBank/DDBJ databases">
        <title>Complete sequence of Desulfovibrio vulgaris str. 'Miyazaki F'.</title>
        <authorList>
            <person name="Lucas S."/>
            <person name="Copeland A."/>
            <person name="Lapidus A."/>
            <person name="Glavina del Rio T."/>
            <person name="Dalin E."/>
            <person name="Tice H."/>
            <person name="Bruce D."/>
            <person name="Goodwin L."/>
            <person name="Pitluck S."/>
            <person name="Sims D."/>
            <person name="Brettin T."/>
            <person name="Detter J.C."/>
            <person name="Han C."/>
            <person name="Larimer F."/>
            <person name="Land M."/>
            <person name="Hauser L."/>
            <person name="Kyrpides N."/>
            <person name="Mikhailova N."/>
            <person name="Hazen T.C."/>
            <person name="Richardson P."/>
        </authorList>
    </citation>
    <scope>NUCLEOTIDE SEQUENCE [LARGE SCALE GENOMIC DNA]</scope>
    <source>
        <strain>DSM 19637 / Miyazaki F</strain>
    </source>
</reference>
<feature type="chain" id="PRO_1000204792" description="Potassium-transporting ATPase KdpC subunit">
    <location>
        <begin position="1"/>
        <end position="197"/>
    </location>
</feature>
<feature type="transmembrane region" description="Helical" evidence="1">
    <location>
        <begin position="9"/>
        <end position="29"/>
    </location>
</feature>
<organism>
    <name type="scientific">Nitratidesulfovibrio vulgaris (strain DSM 19637 / Miyazaki F)</name>
    <name type="common">Desulfovibrio vulgaris</name>
    <dbReference type="NCBI Taxonomy" id="883"/>
    <lineage>
        <taxon>Bacteria</taxon>
        <taxon>Pseudomonadati</taxon>
        <taxon>Thermodesulfobacteriota</taxon>
        <taxon>Desulfovibrionia</taxon>
        <taxon>Desulfovibrionales</taxon>
        <taxon>Desulfovibrionaceae</taxon>
        <taxon>Nitratidesulfovibrio</taxon>
    </lineage>
</organism>
<protein>
    <recommendedName>
        <fullName evidence="1">Potassium-transporting ATPase KdpC subunit</fullName>
    </recommendedName>
    <alternativeName>
        <fullName evidence="1">ATP phosphohydrolase [potassium-transporting] C chain</fullName>
    </alternativeName>
    <alternativeName>
        <fullName evidence="1">Potassium-binding and translocating subunit C</fullName>
    </alternativeName>
    <alternativeName>
        <fullName evidence="1">Potassium-translocating ATPase C chain</fullName>
    </alternativeName>
</protein>
<comment type="function">
    <text evidence="1">Part of the high-affinity ATP-driven potassium transport (or Kdp) system, which catalyzes the hydrolysis of ATP coupled with the electrogenic transport of potassium into the cytoplasm. This subunit acts as a catalytic chaperone that increases the ATP-binding affinity of the ATP-hydrolyzing subunit KdpB by the formation of a transient KdpB/KdpC/ATP ternary complex.</text>
</comment>
<comment type="subunit">
    <text evidence="1">The system is composed of three essential subunits: KdpA, KdpB and KdpC.</text>
</comment>
<comment type="subcellular location">
    <subcellularLocation>
        <location evidence="1">Cell inner membrane</location>
        <topology evidence="1">Single-pass membrane protein</topology>
    </subcellularLocation>
</comment>
<comment type="similarity">
    <text evidence="1">Belongs to the KdpC family.</text>
</comment>
<name>KDPC_NITV9</name>